<organism>
    <name type="scientific">Bordetella parapertussis (strain 12822 / ATCC BAA-587 / NCTC 13253)</name>
    <dbReference type="NCBI Taxonomy" id="257311"/>
    <lineage>
        <taxon>Bacteria</taxon>
        <taxon>Pseudomonadati</taxon>
        <taxon>Pseudomonadota</taxon>
        <taxon>Betaproteobacteria</taxon>
        <taxon>Burkholderiales</taxon>
        <taxon>Alcaligenaceae</taxon>
        <taxon>Bordetella</taxon>
    </lineage>
</organism>
<comment type="function">
    <text evidence="1">Catalyzes the conversion of 4-hydroxy-tetrahydrodipicolinate (HTPA) to tetrahydrodipicolinate.</text>
</comment>
<comment type="catalytic activity">
    <reaction evidence="1">
        <text>(S)-2,3,4,5-tetrahydrodipicolinate + NAD(+) + H2O = (2S,4S)-4-hydroxy-2,3,4,5-tetrahydrodipicolinate + NADH + H(+)</text>
        <dbReference type="Rhea" id="RHEA:35323"/>
        <dbReference type="ChEBI" id="CHEBI:15377"/>
        <dbReference type="ChEBI" id="CHEBI:15378"/>
        <dbReference type="ChEBI" id="CHEBI:16845"/>
        <dbReference type="ChEBI" id="CHEBI:57540"/>
        <dbReference type="ChEBI" id="CHEBI:57945"/>
        <dbReference type="ChEBI" id="CHEBI:67139"/>
        <dbReference type="EC" id="1.17.1.8"/>
    </reaction>
</comment>
<comment type="catalytic activity">
    <reaction evidence="1">
        <text>(S)-2,3,4,5-tetrahydrodipicolinate + NADP(+) + H2O = (2S,4S)-4-hydroxy-2,3,4,5-tetrahydrodipicolinate + NADPH + H(+)</text>
        <dbReference type="Rhea" id="RHEA:35331"/>
        <dbReference type="ChEBI" id="CHEBI:15377"/>
        <dbReference type="ChEBI" id="CHEBI:15378"/>
        <dbReference type="ChEBI" id="CHEBI:16845"/>
        <dbReference type="ChEBI" id="CHEBI:57783"/>
        <dbReference type="ChEBI" id="CHEBI:58349"/>
        <dbReference type="ChEBI" id="CHEBI:67139"/>
        <dbReference type="EC" id="1.17.1.8"/>
    </reaction>
</comment>
<comment type="pathway">
    <text evidence="1">Amino-acid biosynthesis; L-lysine biosynthesis via DAP pathway; (S)-tetrahydrodipicolinate from L-aspartate: step 4/4.</text>
</comment>
<comment type="subcellular location">
    <subcellularLocation>
        <location evidence="1">Cytoplasm</location>
    </subcellularLocation>
</comment>
<comment type="similarity">
    <text evidence="1">Belongs to the DapB family.</text>
</comment>
<comment type="caution">
    <text evidence="2">Was originally thought to be a dihydrodipicolinate reductase (DHDPR), catalyzing the conversion of dihydrodipicolinate to tetrahydrodipicolinate. However, it was shown in E.coli that the substrate of the enzymatic reaction is not dihydrodipicolinate (DHDP) but in fact (2S,4S)-4-hydroxy-2,3,4,5-tetrahydrodipicolinic acid (HTPA), the product released by the DapA-catalyzed reaction.</text>
</comment>
<name>DAPB_BORPA</name>
<keyword id="KW-0028">Amino-acid biosynthesis</keyword>
<keyword id="KW-0963">Cytoplasm</keyword>
<keyword id="KW-0220">Diaminopimelate biosynthesis</keyword>
<keyword id="KW-0457">Lysine biosynthesis</keyword>
<keyword id="KW-0520">NAD</keyword>
<keyword id="KW-0521">NADP</keyword>
<keyword id="KW-0560">Oxidoreductase</keyword>
<evidence type="ECO:0000255" key="1">
    <source>
        <dbReference type="HAMAP-Rule" id="MF_00102"/>
    </source>
</evidence>
<evidence type="ECO:0000305" key="2"/>
<reference key="1">
    <citation type="journal article" date="2003" name="Nat. Genet.">
        <title>Comparative analysis of the genome sequences of Bordetella pertussis, Bordetella parapertussis and Bordetella bronchiseptica.</title>
        <authorList>
            <person name="Parkhill J."/>
            <person name="Sebaihia M."/>
            <person name="Preston A."/>
            <person name="Murphy L.D."/>
            <person name="Thomson N.R."/>
            <person name="Harris D.E."/>
            <person name="Holden M.T.G."/>
            <person name="Churcher C.M."/>
            <person name="Bentley S.D."/>
            <person name="Mungall K.L."/>
            <person name="Cerdeno-Tarraga A.-M."/>
            <person name="Temple L."/>
            <person name="James K.D."/>
            <person name="Harris B."/>
            <person name="Quail M.A."/>
            <person name="Achtman M."/>
            <person name="Atkin R."/>
            <person name="Baker S."/>
            <person name="Basham D."/>
            <person name="Bason N."/>
            <person name="Cherevach I."/>
            <person name="Chillingworth T."/>
            <person name="Collins M."/>
            <person name="Cronin A."/>
            <person name="Davis P."/>
            <person name="Doggett J."/>
            <person name="Feltwell T."/>
            <person name="Goble A."/>
            <person name="Hamlin N."/>
            <person name="Hauser H."/>
            <person name="Holroyd S."/>
            <person name="Jagels K."/>
            <person name="Leather S."/>
            <person name="Moule S."/>
            <person name="Norberczak H."/>
            <person name="O'Neil S."/>
            <person name="Ormond D."/>
            <person name="Price C."/>
            <person name="Rabbinowitsch E."/>
            <person name="Rutter S."/>
            <person name="Sanders M."/>
            <person name="Saunders D."/>
            <person name="Seeger K."/>
            <person name="Sharp S."/>
            <person name="Simmonds M."/>
            <person name="Skelton J."/>
            <person name="Squares R."/>
            <person name="Squares S."/>
            <person name="Stevens K."/>
            <person name="Unwin L."/>
            <person name="Whitehead S."/>
            <person name="Barrell B.G."/>
            <person name="Maskell D.J."/>
        </authorList>
    </citation>
    <scope>NUCLEOTIDE SEQUENCE [LARGE SCALE GENOMIC DNA]</scope>
    <source>
        <strain>12822 / ATCC BAA-587 / NCTC 13253</strain>
    </source>
</reference>
<sequence>MTQATPQRIAIAGASGRMGQMLIEAVLDTEGVELAVALDRAGSPSIGQDAGAALGRPCGVTITDQLDALAQADCLIDFTRPEGTLQHLQACLRHDVKMVIGTTGFDSSGRAEIEVAAQKIAIVFAPNMSVGVNATLKLLDMAARILNSGYDVEIFEAHHRNKVDAPSGTALIMGETVASAWDVALPDVATWTRHGDTGVRKPGTIGFSVVRGGDIVGDHTVFFCGTGERIEISHRSSSRATYAQGAVRAARFLARQDNGLYDMQAVLGL</sequence>
<dbReference type="EC" id="1.17.1.8" evidence="1"/>
<dbReference type="EMBL" id="BX640433">
    <property type="protein sequence ID" value="CAE38780.1"/>
    <property type="molecule type" value="Genomic_DNA"/>
</dbReference>
<dbReference type="RefSeq" id="WP_010926993.1">
    <property type="nucleotide sequence ID" value="NC_002928.3"/>
</dbReference>
<dbReference type="SMR" id="Q7W510"/>
<dbReference type="GeneID" id="93205282"/>
<dbReference type="KEGG" id="bpa:BPP3496"/>
<dbReference type="HOGENOM" id="CLU_047479_2_1_4"/>
<dbReference type="UniPathway" id="UPA00034">
    <property type="reaction ID" value="UER00018"/>
</dbReference>
<dbReference type="Proteomes" id="UP000001421">
    <property type="component" value="Chromosome"/>
</dbReference>
<dbReference type="GO" id="GO:0005829">
    <property type="term" value="C:cytosol"/>
    <property type="evidence" value="ECO:0007669"/>
    <property type="project" value="TreeGrafter"/>
</dbReference>
<dbReference type="GO" id="GO:0008839">
    <property type="term" value="F:4-hydroxy-tetrahydrodipicolinate reductase"/>
    <property type="evidence" value="ECO:0007669"/>
    <property type="project" value="UniProtKB-EC"/>
</dbReference>
<dbReference type="GO" id="GO:0051287">
    <property type="term" value="F:NAD binding"/>
    <property type="evidence" value="ECO:0007669"/>
    <property type="project" value="UniProtKB-UniRule"/>
</dbReference>
<dbReference type="GO" id="GO:0050661">
    <property type="term" value="F:NADP binding"/>
    <property type="evidence" value="ECO:0007669"/>
    <property type="project" value="UniProtKB-UniRule"/>
</dbReference>
<dbReference type="GO" id="GO:0016726">
    <property type="term" value="F:oxidoreductase activity, acting on CH or CH2 groups, NAD or NADP as acceptor"/>
    <property type="evidence" value="ECO:0007669"/>
    <property type="project" value="UniProtKB-UniRule"/>
</dbReference>
<dbReference type="GO" id="GO:0019877">
    <property type="term" value="P:diaminopimelate biosynthetic process"/>
    <property type="evidence" value="ECO:0007669"/>
    <property type="project" value="UniProtKB-UniRule"/>
</dbReference>
<dbReference type="GO" id="GO:0009089">
    <property type="term" value="P:lysine biosynthetic process via diaminopimelate"/>
    <property type="evidence" value="ECO:0007669"/>
    <property type="project" value="UniProtKB-UniRule"/>
</dbReference>
<dbReference type="CDD" id="cd02274">
    <property type="entry name" value="DHDPR_N"/>
    <property type="match status" value="1"/>
</dbReference>
<dbReference type="FunFam" id="3.30.360.10:FF:000004">
    <property type="entry name" value="4-hydroxy-tetrahydrodipicolinate reductase"/>
    <property type="match status" value="1"/>
</dbReference>
<dbReference type="FunFam" id="3.40.50.720:FF:000048">
    <property type="entry name" value="4-hydroxy-tetrahydrodipicolinate reductase"/>
    <property type="match status" value="1"/>
</dbReference>
<dbReference type="Gene3D" id="3.30.360.10">
    <property type="entry name" value="Dihydrodipicolinate Reductase, domain 2"/>
    <property type="match status" value="1"/>
</dbReference>
<dbReference type="Gene3D" id="3.40.50.720">
    <property type="entry name" value="NAD(P)-binding Rossmann-like Domain"/>
    <property type="match status" value="1"/>
</dbReference>
<dbReference type="HAMAP" id="MF_00102">
    <property type="entry name" value="DapB"/>
    <property type="match status" value="1"/>
</dbReference>
<dbReference type="InterPro" id="IPR022663">
    <property type="entry name" value="DapB_C"/>
</dbReference>
<dbReference type="InterPro" id="IPR000846">
    <property type="entry name" value="DapB_N"/>
</dbReference>
<dbReference type="InterPro" id="IPR022664">
    <property type="entry name" value="DapB_N_CS"/>
</dbReference>
<dbReference type="InterPro" id="IPR023940">
    <property type="entry name" value="DHDPR_bac"/>
</dbReference>
<dbReference type="InterPro" id="IPR036291">
    <property type="entry name" value="NAD(P)-bd_dom_sf"/>
</dbReference>
<dbReference type="NCBIfam" id="TIGR00036">
    <property type="entry name" value="dapB"/>
    <property type="match status" value="1"/>
</dbReference>
<dbReference type="PANTHER" id="PTHR20836:SF0">
    <property type="entry name" value="4-HYDROXY-TETRAHYDRODIPICOLINATE REDUCTASE 1, CHLOROPLASTIC-RELATED"/>
    <property type="match status" value="1"/>
</dbReference>
<dbReference type="PANTHER" id="PTHR20836">
    <property type="entry name" value="DIHYDRODIPICOLINATE REDUCTASE"/>
    <property type="match status" value="1"/>
</dbReference>
<dbReference type="Pfam" id="PF05173">
    <property type="entry name" value="DapB_C"/>
    <property type="match status" value="1"/>
</dbReference>
<dbReference type="Pfam" id="PF01113">
    <property type="entry name" value="DapB_N"/>
    <property type="match status" value="1"/>
</dbReference>
<dbReference type="PIRSF" id="PIRSF000161">
    <property type="entry name" value="DHPR"/>
    <property type="match status" value="1"/>
</dbReference>
<dbReference type="SUPFAM" id="SSF55347">
    <property type="entry name" value="Glyceraldehyde-3-phosphate dehydrogenase-like, C-terminal domain"/>
    <property type="match status" value="1"/>
</dbReference>
<dbReference type="SUPFAM" id="SSF51735">
    <property type="entry name" value="NAD(P)-binding Rossmann-fold domains"/>
    <property type="match status" value="1"/>
</dbReference>
<dbReference type="PROSITE" id="PS01298">
    <property type="entry name" value="DAPB"/>
    <property type="match status" value="1"/>
</dbReference>
<accession>Q7W510</accession>
<proteinExistence type="inferred from homology"/>
<protein>
    <recommendedName>
        <fullName evidence="1">4-hydroxy-tetrahydrodipicolinate reductase</fullName>
        <shortName evidence="1">HTPA reductase</shortName>
        <ecNumber evidence="1">1.17.1.8</ecNumber>
    </recommendedName>
</protein>
<feature type="chain" id="PRO_0000141414" description="4-hydroxy-tetrahydrodipicolinate reductase">
    <location>
        <begin position="1"/>
        <end position="269"/>
    </location>
</feature>
<feature type="active site" description="Proton donor/acceptor" evidence="1">
    <location>
        <position position="158"/>
    </location>
</feature>
<feature type="active site" description="Proton donor" evidence="1">
    <location>
        <position position="162"/>
    </location>
</feature>
<feature type="binding site" evidence="1">
    <location>
        <begin position="13"/>
        <end position="18"/>
    </location>
    <ligand>
        <name>NAD(+)</name>
        <dbReference type="ChEBI" id="CHEBI:57540"/>
    </ligand>
</feature>
<feature type="binding site" evidence="1">
    <location>
        <position position="39"/>
    </location>
    <ligand>
        <name>NAD(+)</name>
        <dbReference type="ChEBI" id="CHEBI:57540"/>
    </ligand>
</feature>
<feature type="binding site" evidence="1">
    <location>
        <position position="40"/>
    </location>
    <ligand>
        <name>NADP(+)</name>
        <dbReference type="ChEBI" id="CHEBI:58349"/>
    </ligand>
</feature>
<feature type="binding site" evidence="1">
    <location>
        <begin position="101"/>
        <end position="103"/>
    </location>
    <ligand>
        <name>NAD(+)</name>
        <dbReference type="ChEBI" id="CHEBI:57540"/>
    </ligand>
</feature>
<feature type="binding site" evidence="1">
    <location>
        <begin position="125"/>
        <end position="128"/>
    </location>
    <ligand>
        <name>NAD(+)</name>
        <dbReference type="ChEBI" id="CHEBI:57540"/>
    </ligand>
</feature>
<feature type="binding site" evidence="1">
    <location>
        <position position="159"/>
    </location>
    <ligand>
        <name>(S)-2,3,4,5-tetrahydrodipicolinate</name>
        <dbReference type="ChEBI" id="CHEBI:16845"/>
    </ligand>
</feature>
<feature type="binding site" evidence="1">
    <location>
        <begin position="168"/>
        <end position="169"/>
    </location>
    <ligand>
        <name>(S)-2,3,4,5-tetrahydrodipicolinate</name>
        <dbReference type="ChEBI" id="CHEBI:16845"/>
    </ligand>
</feature>
<gene>
    <name evidence="1" type="primary">dapB</name>
    <name type="ordered locus">BPP3496</name>
</gene>